<organism>
    <name type="scientific">Streptococcus agalactiae serotype V (strain ATCC BAA-611 / 2603 V/R)</name>
    <dbReference type="NCBI Taxonomy" id="208435"/>
    <lineage>
        <taxon>Bacteria</taxon>
        <taxon>Bacillati</taxon>
        <taxon>Bacillota</taxon>
        <taxon>Bacilli</taxon>
        <taxon>Lactobacillales</taxon>
        <taxon>Streptococcaceae</taxon>
        <taxon>Streptococcus</taxon>
    </lineage>
</organism>
<protein>
    <recommendedName>
        <fullName evidence="1">UDP-N-acetylmuramoyl-L-alanyl-D-glutamate--L-lysine ligase</fullName>
        <ecNumber evidence="1">6.3.2.7</ecNumber>
    </recommendedName>
    <alternativeName>
        <fullName evidence="1">L-lysine-adding enzyme</fullName>
    </alternativeName>
    <alternativeName>
        <fullName evidence="1">UDP-MurNAc-L-Ala-D-Glu:L-Lys ligase</fullName>
    </alternativeName>
    <alternativeName>
        <fullName evidence="1">UDP-MurNAc-tripeptide synthetase</fullName>
    </alternativeName>
    <alternativeName>
        <fullName evidence="1">UDP-N-acetylmuramyl-tripeptide synthetase</fullName>
    </alternativeName>
</protein>
<feature type="chain" id="PRO_0000101949" description="UDP-N-acetylmuramoyl-L-alanyl-D-glutamate--L-lysine ligase">
    <location>
        <begin position="1"/>
        <end position="484"/>
    </location>
</feature>
<feature type="short sequence motif" description="L-lysine recognition motif">
    <location>
        <begin position="405"/>
        <end position="408"/>
    </location>
</feature>
<feature type="binding site" evidence="1">
    <location>
        <position position="43"/>
    </location>
    <ligand>
        <name>UDP-N-acetyl-alpha-D-muramoyl-L-alanyl-D-glutamate</name>
        <dbReference type="ChEBI" id="CHEBI:83900"/>
    </ligand>
</feature>
<feature type="binding site" evidence="1">
    <location>
        <begin position="119"/>
        <end position="125"/>
    </location>
    <ligand>
        <name>ATP</name>
        <dbReference type="ChEBI" id="CHEBI:30616"/>
    </ligand>
</feature>
<feature type="binding site" evidence="1">
    <location>
        <begin position="161"/>
        <end position="162"/>
    </location>
    <ligand>
        <name>UDP-N-acetyl-alpha-D-muramoyl-L-alanyl-D-glutamate</name>
        <dbReference type="ChEBI" id="CHEBI:83900"/>
    </ligand>
</feature>
<feature type="binding site" evidence="1">
    <location>
        <position position="188"/>
    </location>
    <ligand>
        <name>UDP-N-acetyl-alpha-D-muramoyl-L-alanyl-D-glutamate</name>
        <dbReference type="ChEBI" id="CHEBI:83900"/>
    </ligand>
</feature>
<feature type="binding site" evidence="1">
    <location>
        <position position="196"/>
    </location>
    <ligand>
        <name>UDP-N-acetyl-alpha-D-muramoyl-L-alanyl-D-glutamate</name>
        <dbReference type="ChEBI" id="CHEBI:83900"/>
    </ligand>
</feature>
<feature type="modified residue" description="N6-carboxylysine" evidence="1">
    <location>
        <position position="230"/>
    </location>
</feature>
<gene>
    <name evidence="1" type="primary">murE</name>
    <name type="ordered locus">SAG1391</name>
</gene>
<dbReference type="EC" id="6.3.2.7" evidence="1"/>
<dbReference type="EMBL" id="AE009948">
    <property type="protein sequence ID" value="AAN00262.1"/>
    <property type="molecule type" value="Genomic_DNA"/>
</dbReference>
<dbReference type="RefSeq" id="NP_688389.1">
    <property type="nucleotide sequence ID" value="NC_004116.1"/>
</dbReference>
<dbReference type="RefSeq" id="WP_000628279.1">
    <property type="nucleotide sequence ID" value="NC_004116.1"/>
</dbReference>
<dbReference type="SMR" id="Q8DYT2"/>
<dbReference type="STRING" id="208435.SAG1391"/>
<dbReference type="KEGG" id="sag:SAG1391"/>
<dbReference type="PATRIC" id="fig|208435.3.peg.1399"/>
<dbReference type="HOGENOM" id="CLU_022291_4_2_9"/>
<dbReference type="OrthoDB" id="9800958at2"/>
<dbReference type="UniPathway" id="UPA00219"/>
<dbReference type="Proteomes" id="UP000000821">
    <property type="component" value="Chromosome"/>
</dbReference>
<dbReference type="GO" id="GO:0005737">
    <property type="term" value="C:cytoplasm"/>
    <property type="evidence" value="ECO:0007669"/>
    <property type="project" value="UniProtKB-SubCell"/>
</dbReference>
<dbReference type="GO" id="GO:0005524">
    <property type="term" value="F:ATP binding"/>
    <property type="evidence" value="ECO:0007669"/>
    <property type="project" value="UniProtKB-UniRule"/>
</dbReference>
<dbReference type="GO" id="GO:0000287">
    <property type="term" value="F:magnesium ion binding"/>
    <property type="evidence" value="ECO:0007669"/>
    <property type="project" value="UniProtKB-UniRule"/>
</dbReference>
<dbReference type="GO" id="GO:0047482">
    <property type="term" value="F:UDP-N-acetylmuramoyl-L-alanyl-D-glutamate-L-lysine ligase activity"/>
    <property type="evidence" value="ECO:0007669"/>
    <property type="project" value="UniProtKB-UniRule"/>
</dbReference>
<dbReference type="GO" id="GO:0051301">
    <property type="term" value="P:cell division"/>
    <property type="evidence" value="ECO:0007669"/>
    <property type="project" value="UniProtKB-KW"/>
</dbReference>
<dbReference type="GO" id="GO:0071555">
    <property type="term" value="P:cell wall organization"/>
    <property type="evidence" value="ECO:0007669"/>
    <property type="project" value="UniProtKB-KW"/>
</dbReference>
<dbReference type="GO" id="GO:0009252">
    <property type="term" value="P:peptidoglycan biosynthetic process"/>
    <property type="evidence" value="ECO:0007669"/>
    <property type="project" value="UniProtKB-UniRule"/>
</dbReference>
<dbReference type="GO" id="GO:0008360">
    <property type="term" value="P:regulation of cell shape"/>
    <property type="evidence" value="ECO:0007669"/>
    <property type="project" value="UniProtKB-KW"/>
</dbReference>
<dbReference type="Gene3D" id="3.90.190.20">
    <property type="entry name" value="Mur ligase, C-terminal domain"/>
    <property type="match status" value="1"/>
</dbReference>
<dbReference type="Gene3D" id="3.40.1190.10">
    <property type="entry name" value="Mur-like, catalytic domain"/>
    <property type="match status" value="1"/>
</dbReference>
<dbReference type="Gene3D" id="3.40.1390.10">
    <property type="entry name" value="MurE/MurF, N-terminal domain"/>
    <property type="match status" value="1"/>
</dbReference>
<dbReference type="HAMAP" id="MF_00208">
    <property type="entry name" value="MurE"/>
    <property type="match status" value="1"/>
</dbReference>
<dbReference type="InterPro" id="IPR036565">
    <property type="entry name" value="Mur-like_cat_sf"/>
</dbReference>
<dbReference type="InterPro" id="IPR004101">
    <property type="entry name" value="Mur_ligase_C"/>
</dbReference>
<dbReference type="InterPro" id="IPR036615">
    <property type="entry name" value="Mur_ligase_C_dom_sf"/>
</dbReference>
<dbReference type="InterPro" id="IPR013221">
    <property type="entry name" value="Mur_ligase_cen"/>
</dbReference>
<dbReference type="InterPro" id="IPR035911">
    <property type="entry name" value="MurE/MurF_N"/>
</dbReference>
<dbReference type="InterPro" id="IPR005761">
    <property type="entry name" value="UDP-N-AcMur-Glu-dNH2Pim_ligase"/>
</dbReference>
<dbReference type="NCBIfam" id="TIGR01085">
    <property type="entry name" value="murE"/>
    <property type="match status" value="1"/>
</dbReference>
<dbReference type="NCBIfam" id="NF010628">
    <property type="entry name" value="PRK14022.1"/>
    <property type="match status" value="1"/>
</dbReference>
<dbReference type="PANTHER" id="PTHR23135">
    <property type="entry name" value="MUR LIGASE FAMILY MEMBER"/>
    <property type="match status" value="1"/>
</dbReference>
<dbReference type="PANTHER" id="PTHR23135:SF4">
    <property type="entry name" value="UDP-N-ACETYLMURAMOYL-L-ALANYL-D-GLUTAMATE--2,6-DIAMINOPIMELATE LIGASE MURE HOMOLOG, CHLOROPLASTIC"/>
    <property type="match status" value="1"/>
</dbReference>
<dbReference type="Pfam" id="PF02875">
    <property type="entry name" value="Mur_ligase_C"/>
    <property type="match status" value="1"/>
</dbReference>
<dbReference type="Pfam" id="PF08245">
    <property type="entry name" value="Mur_ligase_M"/>
    <property type="match status" value="1"/>
</dbReference>
<dbReference type="SUPFAM" id="SSF53623">
    <property type="entry name" value="MurD-like peptide ligases, catalytic domain"/>
    <property type="match status" value="1"/>
</dbReference>
<dbReference type="SUPFAM" id="SSF53244">
    <property type="entry name" value="MurD-like peptide ligases, peptide-binding domain"/>
    <property type="match status" value="1"/>
</dbReference>
<dbReference type="SUPFAM" id="SSF63418">
    <property type="entry name" value="MurE/MurF N-terminal domain"/>
    <property type="match status" value="1"/>
</dbReference>
<keyword id="KW-0067">ATP-binding</keyword>
<keyword id="KW-0131">Cell cycle</keyword>
<keyword id="KW-0132">Cell division</keyword>
<keyword id="KW-0133">Cell shape</keyword>
<keyword id="KW-0961">Cell wall biogenesis/degradation</keyword>
<keyword id="KW-0963">Cytoplasm</keyword>
<keyword id="KW-0436">Ligase</keyword>
<keyword id="KW-0547">Nucleotide-binding</keyword>
<keyword id="KW-0573">Peptidoglycan synthesis</keyword>
<keyword id="KW-1185">Reference proteome</keyword>
<comment type="function">
    <text evidence="1">Catalyzes the addition of L-lysine to the nucleotide precursor UDP-N-acetylmuramoyl-L-alanyl-D-glutamate (UMAG) in the biosynthesis of bacterial cell-wall peptidoglycan.</text>
</comment>
<comment type="catalytic activity">
    <reaction evidence="1">
        <text>UDP-N-acetyl-alpha-D-muramoyl-L-alanyl-D-glutamate + L-lysine + ATP = UDP-N-acetyl-alpha-D-muramoyl-L-alanyl-gamma-D-glutamyl-L-lysine + ADP + phosphate + H(+)</text>
        <dbReference type="Rhea" id="RHEA:17969"/>
        <dbReference type="ChEBI" id="CHEBI:15378"/>
        <dbReference type="ChEBI" id="CHEBI:30616"/>
        <dbReference type="ChEBI" id="CHEBI:32551"/>
        <dbReference type="ChEBI" id="CHEBI:43474"/>
        <dbReference type="ChEBI" id="CHEBI:83900"/>
        <dbReference type="ChEBI" id="CHEBI:83903"/>
        <dbReference type="ChEBI" id="CHEBI:456216"/>
        <dbReference type="EC" id="6.3.2.7"/>
    </reaction>
</comment>
<comment type="pathway">
    <text evidence="1">Cell wall biogenesis; peptidoglycan biosynthesis.</text>
</comment>
<comment type="subcellular location">
    <subcellularLocation>
        <location evidence="1">Cytoplasm</location>
    </subcellularLocation>
</comment>
<comment type="PTM">
    <text evidence="1">Carboxylation is probably crucial for Mg(2+) binding and, consequently, for the gamma-phosphate positioning of ATP.</text>
</comment>
<comment type="similarity">
    <text evidence="1">Belongs to the MurCDEF family. MurE subfamily.</text>
</comment>
<proteinExistence type="inferred from homology"/>
<reference key="1">
    <citation type="journal article" date="2002" name="Proc. Natl. Acad. Sci. U.S.A.">
        <title>Complete genome sequence and comparative genomic analysis of an emerging human pathogen, serotype V Streptococcus agalactiae.</title>
        <authorList>
            <person name="Tettelin H."/>
            <person name="Masignani V."/>
            <person name="Cieslewicz M.J."/>
            <person name="Eisen J.A."/>
            <person name="Peterson S.N."/>
            <person name="Wessels M.R."/>
            <person name="Paulsen I.T."/>
            <person name="Nelson K.E."/>
            <person name="Margarit I."/>
            <person name="Read T.D."/>
            <person name="Madoff L.C."/>
            <person name="Wolf A.M."/>
            <person name="Beanan M.J."/>
            <person name="Brinkac L.M."/>
            <person name="Daugherty S.C."/>
            <person name="DeBoy R.T."/>
            <person name="Durkin A.S."/>
            <person name="Kolonay J.F."/>
            <person name="Madupu R."/>
            <person name="Lewis M.R."/>
            <person name="Radune D."/>
            <person name="Fedorova N.B."/>
            <person name="Scanlan D."/>
            <person name="Khouri H.M."/>
            <person name="Mulligan S."/>
            <person name="Carty H.A."/>
            <person name="Cline R.T."/>
            <person name="Van Aken S.E."/>
            <person name="Gill J."/>
            <person name="Scarselli M."/>
            <person name="Mora M."/>
            <person name="Iacobini E.T."/>
            <person name="Brettoni C."/>
            <person name="Galli G."/>
            <person name="Mariani M."/>
            <person name="Vegni F."/>
            <person name="Maione D."/>
            <person name="Rinaudo D."/>
            <person name="Rappuoli R."/>
            <person name="Telford J.L."/>
            <person name="Kasper D.L."/>
            <person name="Grandi G."/>
            <person name="Fraser C.M."/>
        </authorList>
    </citation>
    <scope>NUCLEOTIDE SEQUENCE [LARGE SCALE GENOMIC DNA]</scope>
    <source>
        <strain>ATCC BAA-611 / 2603 V/R</strain>
    </source>
</reference>
<name>MURE_STRA5</name>
<evidence type="ECO:0000255" key="1">
    <source>
        <dbReference type="HAMAP-Rule" id="MF_00208"/>
    </source>
</evidence>
<sequence>MITIDKILEILKNDHNFREILFHEHYYYNWTQNVTFNALSYDSRQISSDTLFFAKGATFKKEYLDSAITAGLSFYVSETDYGADIPVILVNDIKKAMSLISMSFYNNPQNKLKLLAFTGTKGKTTAAYFAYHMLKVNHRPAMLSTMNTTLDGKSFFKSHLTTPESLDLFRMMATAVENQMTHLIMEVSSQAYLTKRVYGLTFDVGVFLNISPDHIGPIEHPTFEDYFFHKRLLMENSNAVVVNSQMDHFNIVKEQVEYIPHDFYGDYSENVITESKAFSFHVKGKLENTYDIKLIGKFNQENAIAAGLACLRLGVSIEDIKNGIAQTTVPGRMEVLTQTNGAKIFVDYAHNGDSLKKLLAVVEEHQKGDIILVLGAPGNKGQSRRKDFGDVINQHPNLQVILTADDPNFEDPLVISQEIASHINRPVTIIIDREEAIANASTLTNCKLDAIIIAGKGADAYQIIKGNRDNYSGDLEVAKKYLKR</sequence>
<accession>Q8DYT2</accession>